<keyword id="KW-0067">ATP-binding</keyword>
<keyword id="KW-0175">Coiled coil</keyword>
<keyword id="KW-0963">Cytoplasm</keyword>
<keyword id="KW-0378">Hydrolase</keyword>
<keyword id="KW-0547">Nucleotide-binding</keyword>
<keyword id="KW-1185">Reference proteome</keyword>
<keyword id="KW-0749">Sporulation</keyword>
<reference evidence="6" key="1">
    <citation type="journal article" date="2006" name="Nat. Genet.">
        <title>The multidrug-resistant human pathogen Clostridium difficile has a highly mobile, mosaic genome.</title>
        <authorList>
            <person name="Sebaihia M."/>
            <person name="Wren B.W."/>
            <person name="Mullany P."/>
            <person name="Fairweather N.F."/>
            <person name="Minton N."/>
            <person name="Stabler R."/>
            <person name="Thomson N.R."/>
            <person name="Roberts A.P."/>
            <person name="Cerdeno-Tarraga A.M."/>
            <person name="Wang H."/>
            <person name="Holden M.T.G."/>
            <person name="Wright A."/>
            <person name="Churcher C."/>
            <person name="Quail M.A."/>
            <person name="Baker S."/>
            <person name="Bason N."/>
            <person name="Brooks K."/>
            <person name="Chillingworth T."/>
            <person name="Cronin A."/>
            <person name="Davis P."/>
            <person name="Dowd L."/>
            <person name="Fraser A."/>
            <person name="Feltwell T."/>
            <person name="Hance Z."/>
            <person name="Holroyd S."/>
            <person name="Jagels K."/>
            <person name="Moule S."/>
            <person name="Mungall K."/>
            <person name="Price C."/>
            <person name="Rabbinowitsch E."/>
            <person name="Sharp S."/>
            <person name="Simmonds M."/>
            <person name="Stevens K."/>
            <person name="Unwin L."/>
            <person name="Whithead S."/>
            <person name="Dupuy B."/>
            <person name="Dougan G."/>
            <person name="Barrell B."/>
            <person name="Parkhill J."/>
        </authorList>
    </citation>
    <scope>NUCLEOTIDE SEQUENCE [LARGE SCALE GENOMIC DNA]</scope>
    <source>
        <strain evidence="6">630</strain>
    </source>
</reference>
<reference evidence="5" key="2">
    <citation type="journal article" date="2013" name="J. Bacteriol.">
        <title>SpoIVA and SipL are Clostridium difficile spore morphogenetic proteins.</title>
        <authorList>
            <person name="Putnam E.E."/>
            <person name="Nock A.M."/>
            <person name="Lawley T.D."/>
            <person name="Shen A."/>
        </authorList>
    </citation>
    <scope>FUNCTION</scope>
    <scope>INTERACTION WITH SIPL</scope>
    <scope>SUBCELLULAR LOCATION</scope>
    <scope>DISRUPTION PHENOTYPE</scope>
    <scope>MUTAGENESIS OF LYS-35</scope>
    <source>
        <strain evidence="3">630</strain>
    </source>
</reference>
<proteinExistence type="evidence at protein level"/>
<organism>
    <name type="scientific">Clostridioides difficile (strain 630)</name>
    <name type="common">Peptoclostridium difficile</name>
    <dbReference type="NCBI Taxonomy" id="272563"/>
    <lineage>
        <taxon>Bacteria</taxon>
        <taxon>Bacillati</taxon>
        <taxon>Bacillota</taxon>
        <taxon>Clostridia</taxon>
        <taxon>Peptostreptococcales</taxon>
        <taxon>Peptostreptococcaceae</taxon>
        <taxon>Clostridioides</taxon>
    </lineage>
</organism>
<dbReference type="EC" id="3.6.1.-" evidence="1"/>
<dbReference type="EMBL" id="AM180355">
    <property type="protein sequence ID" value="CAJ69515.2"/>
    <property type="molecule type" value="Genomic_DNA"/>
</dbReference>
<dbReference type="RefSeq" id="WP_004454943.1">
    <property type="nucleotide sequence ID" value="NZ_JAUPES010000012.1"/>
</dbReference>
<dbReference type="RefSeq" id="YP_001089140.2">
    <property type="nucleotide sequence ID" value="NC_009089.1"/>
</dbReference>
<dbReference type="STRING" id="272563.CD630_26290"/>
<dbReference type="EnsemblBacteria" id="CAJ69515">
    <property type="protein sequence ID" value="CAJ69515"/>
    <property type="gene ID" value="CD630_26290"/>
</dbReference>
<dbReference type="GeneID" id="66355027"/>
<dbReference type="KEGG" id="cdf:CD630_26290"/>
<dbReference type="KEGG" id="pdc:CDIF630_02883"/>
<dbReference type="PATRIC" id="fig|272563.120.peg.2772"/>
<dbReference type="eggNOG" id="COG0699">
    <property type="taxonomic scope" value="Bacteria"/>
</dbReference>
<dbReference type="OrthoDB" id="9761464at2"/>
<dbReference type="PhylomeDB" id="Q182W3"/>
<dbReference type="BioCyc" id="PDIF272563:G12WB-2780-MONOMER"/>
<dbReference type="Proteomes" id="UP000001978">
    <property type="component" value="Chromosome"/>
</dbReference>
<dbReference type="GO" id="GO:0005737">
    <property type="term" value="C:cytoplasm"/>
    <property type="evidence" value="ECO:0007669"/>
    <property type="project" value="UniProtKB-SubCell"/>
</dbReference>
<dbReference type="GO" id="GO:0042601">
    <property type="term" value="C:endospore-forming forespore"/>
    <property type="evidence" value="ECO:0000315"/>
    <property type="project" value="UniProtKB"/>
</dbReference>
<dbReference type="GO" id="GO:0031160">
    <property type="term" value="C:spore wall"/>
    <property type="evidence" value="ECO:0000315"/>
    <property type="project" value="UniProtKB"/>
</dbReference>
<dbReference type="GO" id="GO:0005524">
    <property type="term" value="F:ATP binding"/>
    <property type="evidence" value="ECO:0000250"/>
    <property type="project" value="UniProtKB"/>
</dbReference>
<dbReference type="GO" id="GO:0016887">
    <property type="term" value="F:ATP hydrolysis activity"/>
    <property type="evidence" value="ECO:0000250"/>
    <property type="project" value="UniProtKB"/>
</dbReference>
<dbReference type="GO" id="GO:0034301">
    <property type="term" value="P:endospore formation"/>
    <property type="evidence" value="ECO:0000315"/>
    <property type="project" value="CACAO"/>
</dbReference>
<dbReference type="GO" id="GO:0030435">
    <property type="term" value="P:sporulation resulting in formation of a cellular spore"/>
    <property type="evidence" value="ECO:0000315"/>
    <property type="project" value="UniProtKB"/>
</dbReference>
<dbReference type="CDD" id="cd00882">
    <property type="entry name" value="Ras_like_GTPase"/>
    <property type="match status" value="1"/>
</dbReference>
<dbReference type="Gene3D" id="3.40.50.300">
    <property type="entry name" value="P-loop containing nucleotide triphosphate hydrolases"/>
    <property type="match status" value="1"/>
</dbReference>
<dbReference type="InterPro" id="IPR027417">
    <property type="entry name" value="P-loop_NTPase"/>
</dbReference>
<dbReference type="InterPro" id="IPR046842">
    <property type="entry name" value="SpoIVA_ATPase"/>
</dbReference>
<dbReference type="InterPro" id="IPR046840">
    <property type="entry name" value="SpoIVA_C"/>
</dbReference>
<dbReference type="InterPro" id="IPR046841">
    <property type="entry name" value="SpoIVA_middle"/>
</dbReference>
<dbReference type="InterPro" id="IPR014201">
    <property type="entry name" value="Spore_IV_A"/>
</dbReference>
<dbReference type="NCBIfam" id="TIGR02836">
    <property type="entry name" value="spore_IV_A"/>
    <property type="match status" value="1"/>
</dbReference>
<dbReference type="Pfam" id="PF09547">
    <property type="entry name" value="SpoIVA_ATPase"/>
    <property type="match status" value="1"/>
</dbReference>
<dbReference type="Pfam" id="PF20439">
    <property type="entry name" value="SpoIVA_C"/>
    <property type="match status" value="1"/>
</dbReference>
<dbReference type="Pfam" id="PF20438">
    <property type="entry name" value="SpoIVA_middle"/>
    <property type="match status" value="1"/>
</dbReference>
<dbReference type="PIRSF" id="PIRSF007466">
    <property type="entry name" value="SpoIVA"/>
    <property type="match status" value="1"/>
</dbReference>
<dbReference type="SUPFAM" id="SSF52540">
    <property type="entry name" value="P-loop containing nucleoside triphosphate hydrolases"/>
    <property type="match status" value="1"/>
</dbReference>
<protein>
    <recommendedName>
        <fullName evidence="6">Stage IV sporulation protein A</fullName>
        <ecNumber evidence="1">3.6.1.-</ecNumber>
    </recommendedName>
    <alternativeName>
        <fullName evidence="4">Coat morphogenetic protein SpoIVA</fullName>
    </alternativeName>
</protein>
<comment type="function">
    <text evidence="1 3">ATPase. Has a role at an early stage in the morphogenesis of the spore coat and is required for proper coat localization to the forespore.</text>
</comment>
<comment type="catalytic activity">
    <reaction evidence="1">
        <text>ATP + H2O = ADP + phosphate + H(+)</text>
        <dbReference type="Rhea" id="RHEA:13065"/>
        <dbReference type="ChEBI" id="CHEBI:15377"/>
        <dbReference type="ChEBI" id="CHEBI:15378"/>
        <dbReference type="ChEBI" id="CHEBI:30616"/>
        <dbReference type="ChEBI" id="CHEBI:43474"/>
        <dbReference type="ChEBI" id="CHEBI:456216"/>
    </reaction>
</comment>
<comment type="subunit">
    <text evidence="3">Interacts (via Walker A motif) with SipL (via C-terminus LysM domain).</text>
</comment>
<comment type="subcellular location">
    <subcellularLocation>
        <location evidence="1">Cytoplasm</location>
    </subcellularLocation>
    <text evidence="1 3">Localized on spore coat surrounding the forespore.</text>
</comment>
<comment type="disruption phenotype">
    <text evidence="3">Sporulation defects. Defects in proper coat localization around the forespore, but not in cortex formation.</text>
</comment>
<sequence>MNNNIYEDISKRTQGDIYIGVVGPVRTGKSTFIRKFMEKLVIPNIDNEFKKDRTRDEIPQSGSGKTIMTVEPKFVPADGVEIKIKDTVSLKVRMVDCVGYIVEGALGHEEGGKQRLVSTPWSQEAMTFEKAAEIGTKKVIKDHSTIGIVVLTDGSVTGIDRKSYVEPEERVIQELKNLKKPFAVVLNTLSPKSEETSMLRSELEEKYEVPVLPMNVVEMEEEDIEEVMEAVLYDFPLTEIRINLPKWVEGLERNHWIKSSIITTLKQSIIDIGKIRDIEGIIQGFSELEFLEDTGVDNVELGEGVINIDLQTKQDLFYNVLEEKSGFKIEGDYQLLSLITRLSKVKNEYDKIESALIDAKIKGYGVVAPSLEELSLEEPEIMKQGKQYGIKLKANAPSLHIIKADISTEVSPIVGNQNQGEEMIKYLMEVFEEQPADLWESNMFGKSLHDLVKEQLQSKLYTMPEEIRVKMQKTLQKIVNEGSSNIITILL</sequence>
<name>SP4A_CLOD6</name>
<gene>
    <name evidence="6" type="primary">spoIVA</name>
    <name type="ordered locus">CD630_26290</name>
</gene>
<evidence type="ECO:0000250" key="1">
    <source>
        <dbReference type="UniProtKB" id="P35149"/>
    </source>
</evidence>
<evidence type="ECO:0000255" key="2"/>
<evidence type="ECO:0000269" key="3">
    <source>
    </source>
</evidence>
<evidence type="ECO:0000303" key="4">
    <source>
    </source>
</evidence>
<evidence type="ECO:0000305" key="5"/>
<evidence type="ECO:0000312" key="6">
    <source>
        <dbReference type="EMBL" id="CAJ69515.2"/>
    </source>
</evidence>
<accession>Q182W3</accession>
<feature type="chain" id="PRO_0000422238" description="Stage IV sporulation protein A">
    <location>
        <begin position="1"/>
        <end position="491"/>
    </location>
</feature>
<feature type="coiled-coil region" evidence="2">
    <location>
        <begin position="334"/>
        <end position="362"/>
    </location>
</feature>
<feature type="short sequence motif" description="Walker A motif; involved in ATP-binding" evidence="2 5">
    <location>
        <begin position="23"/>
        <end position="30"/>
    </location>
</feature>
<feature type="binding site" evidence="1">
    <location>
        <begin position="23"/>
        <end position="30"/>
    </location>
    <ligand>
        <name>ATP</name>
        <dbReference type="ChEBI" id="CHEBI:30616"/>
    </ligand>
</feature>
<feature type="mutagenesis site" description="Reduced binding to SipL." evidence="3">
    <original>K</original>
    <variation>E</variation>
    <location>
        <position position="35"/>
    </location>
</feature>